<reference key="1">
    <citation type="journal article" date="2008" name="J. Bacteriol.">
        <title>Genome sequence of the chemolithoautotrophic bacterium Oligotropha carboxidovorans OM5T.</title>
        <authorList>
            <person name="Paul D."/>
            <person name="Bridges S."/>
            <person name="Burgess S.C."/>
            <person name="Dandass Y."/>
            <person name="Lawrence M.L."/>
        </authorList>
    </citation>
    <scope>NUCLEOTIDE SEQUENCE [LARGE SCALE GENOMIC DNA]</scope>
    <source>
        <strain>ATCC 49405 / DSM 1227 / KCTC 32145 / OM5</strain>
    </source>
</reference>
<reference key="2">
    <citation type="journal article" date="2011" name="J. Bacteriol.">
        <title>Complete genome sequences of the chemolithoautotrophic Oligotropha carboxidovorans strains OM4 and OM5.</title>
        <authorList>
            <person name="Volland S."/>
            <person name="Rachinger M."/>
            <person name="Strittmatter A."/>
            <person name="Daniel R."/>
            <person name="Gottschalk G."/>
            <person name="Meyer O."/>
        </authorList>
    </citation>
    <scope>NUCLEOTIDE SEQUENCE [LARGE SCALE GENOMIC DNA]</scope>
    <source>
        <strain>ATCC 49405 / DSM 1227 / KCTC 32145 / OM5</strain>
    </source>
</reference>
<proteinExistence type="inferred from homology"/>
<dbReference type="EC" id="4.1.99.17" evidence="1"/>
<dbReference type="EMBL" id="CP001196">
    <property type="protein sequence ID" value="ACI94141.1"/>
    <property type="molecule type" value="Genomic_DNA"/>
</dbReference>
<dbReference type="EMBL" id="CP002826">
    <property type="protein sequence ID" value="AEI05780.1"/>
    <property type="molecule type" value="Genomic_DNA"/>
</dbReference>
<dbReference type="RefSeq" id="WP_012564167.1">
    <property type="nucleotide sequence ID" value="NC_015684.1"/>
</dbReference>
<dbReference type="SMR" id="B6JI86"/>
<dbReference type="STRING" id="504832.OCA5_c10610"/>
<dbReference type="KEGG" id="oca:OCAR_7033"/>
<dbReference type="KEGG" id="ocg:OCA5_c10610"/>
<dbReference type="PATRIC" id="fig|504832.7.peg.1128"/>
<dbReference type="eggNOG" id="COG0422">
    <property type="taxonomic scope" value="Bacteria"/>
</dbReference>
<dbReference type="HOGENOM" id="CLU_013181_2_1_5"/>
<dbReference type="OrthoDB" id="9805897at2"/>
<dbReference type="UniPathway" id="UPA00060"/>
<dbReference type="Proteomes" id="UP000007730">
    <property type="component" value="Chromosome"/>
</dbReference>
<dbReference type="GO" id="GO:0005829">
    <property type="term" value="C:cytosol"/>
    <property type="evidence" value="ECO:0007669"/>
    <property type="project" value="TreeGrafter"/>
</dbReference>
<dbReference type="GO" id="GO:0051539">
    <property type="term" value="F:4 iron, 4 sulfur cluster binding"/>
    <property type="evidence" value="ECO:0007669"/>
    <property type="project" value="UniProtKB-KW"/>
</dbReference>
<dbReference type="GO" id="GO:0016830">
    <property type="term" value="F:carbon-carbon lyase activity"/>
    <property type="evidence" value="ECO:0007669"/>
    <property type="project" value="InterPro"/>
</dbReference>
<dbReference type="GO" id="GO:0008270">
    <property type="term" value="F:zinc ion binding"/>
    <property type="evidence" value="ECO:0007669"/>
    <property type="project" value="UniProtKB-UniRule"/>
</dbReference>
<dbReference type="GO" id="GO:0009228">
    <property type="term" value="P:thiamine biosynthetic process"/>
    <property type="evidence" value="ECO:0007669"/>
    <property type="project" value="UniProtKB-KW"/>
</dbReference>
<dbReference type="GO" id="GO:0009229">
    <property type="term" value="P:thiamine diphosphate biosynthetic process"/>
    <property type="evidence" value="ECO:0007669"/>
    <property type="project" value="UniProtKB-UniRule"/>
</dbReference>
<dbReference type="FunFam" id="3.20.20.540:FF:000001">
    <property type="entry name" value="Phosphomethylpyrimidine synthase"/>
    <property type="match status" value="1"/>
</dbReference>
<dbReference type="Gene3D" id="6.10.250.620">
    <property type="match status" value="1"/>
</dbReference>
<dbReference type="Gene3D" id="3.20.20.540">
    <property type="entry name" value="Radical SAM ThiC family, central domain"/>
    <property type="match status" value="1"/>
</dbReference>
<dbReference type="HAMAP" id="MF_00089">
    <property type="entry name" value="ThiC"/>
    <property type="match status" value="1"/>
</dbReference>
<dbReference type="InterPro" id="IPR037509">
    <property type="entry name" value="ThiC"/>
</dbReference>
<dbReference type="InterPro" id="IPR025747">
    <property type="entry name" value="ThiC-associated_dom"/>
</dbReference>
<dbReference type="InterPro" id="IPR038521">
    <property type="entry name" value="ThiC/Bza_core_dom"/>
</dbReference>
<dbReference type="InterPro" id="IPR002817">
    <property type="entry name" value="ThiC/BzaA/B"/>
</dbReference>
<dbReference type="NCBIfam" id="NF006763">
    <property type="entry name" value="PRK09284.1"/>
    <property type="match status" value="1"/>
</dbReference>
<dbReference type="NCBIfam" id="NF009895">
    <property type="entry name" value="PRK13352.1"/>
    <property type="match status" value="1"/>
</dbReference>
<dbReference type="NCBIfam" id="TIGR00190">
    <property type="entry name" value="thiC"/>
    <property type="match status" value="1"/>
</dbReference>
<dbReference type="PANTHER" id="PTHR30557:SF1">
    <property type="entry name" value="PHOSPHOMETHYLPYRIMIDINE SYNTHASE, CHLOROPLASTIC"/>
    <property type="match status" value="1"/>
</dbReference>
<dbReference type="PANTHER" id="PTHR30557">
    <property type="entry name" value="THIAMINE BIOSYNTHESIS PROTEIN THIC"/>
    <property type="match status" value="1"/>
</dbReference>
<dbReference type="Pfam" id="PF13667">
    <property type="entry name" value="ThiC-associated"/>
    <property type="match status" value="1"/>
</dbReference>
<dbReference type="Pfam" id="PF01964">
    <property type="entry name" value="ThiC_Rad_SAM"/>
    <property type="match status" value="1"/>
</dbReference>
<dbReference type="SFLD" id="SFLDF00407">
    <property type="entry name" value="phosphomethylpyrimidine_syntha"/>
    <property type="match status" value="1"/>
</dbReference>
<dbReference type="SFLD" id="SFLDG01114">
    <property type="entry name" value="phosphomethylpyrimidine_syntha"/>
    <property type="match status" value="1"/>
</dbReference>
<dbReference type="SFLD" id="SFLDS00113">
    <property type="entry name" value="Radical_SAM_Phosphomethylpyrim"/>
    <property type="match status" value="1"/>
</dbReference>
<accession>B6JI86</accession>
<accession>F8BSY9</accession>
<protein>
    <recommendedName>
        <fullName evidence="1">Phosphomethylpyrimidine synthase</fullName>
        <ecNumber evidence="1">4.1.99.17</ecNumber>
    </recommendedName>
    <alternativeName>
        <fullName evidence="1">Hydroxymethylpyrimidine phosphate synthase</fullName>
        <shortName evidence="1">HMP-P synthase</shortName>
        <shortName evidence="1">HMP-phosphate synthase</shortName>
        <shortName evidence="1">HMPP synthase</shortName>
    </alternativeName>
    <alternativeName>
        <fullName evidence="1">Thiamine biosynthesis protein ThiC</fullName>
    </alternativeName>
</protein>
<name>THIC_AFIC5</name>
<comment type="function">
    <text evidence="1">Catalyzes the synthesis of the hydroxymethylpyrimidine phosphate (HMP-P) moiety of thiamine from aminoimidazole ribotide (AIR) in a radical S-adenosyl-L-methionine (SAM)-dependent reaction.</text>
</comment>
<comment type="catalytic activity">
    <reaction evidence="1">
        <text>5-amino-1-(5-phospho-beta-D-ribosyl)imidazole + S-adenosyl-L-methionine = 4-amino-2-methyl-5-(phosphooxymethyl)pyrimidine + CO + 5'-deoxyadenosine + formate + L-methionine + 3 H(+)</text>
        <dbReference type="Rhea" id="RHEA:24840"/>
        <dbReference type="ChEBI" id="CHEBI:15378"/>
        <dbReference type="ChEBI" id="CHEBI:15740"/>
        <dbReference type="ChEBI" id="CHEBI:17245"/>
        <dbReference type="ChEBI" id="CHEBI:17319"/>
        <dbReference type="ChEBI" id="CHEBI:57844"/>
        <dbReference type="ChEBI" id="CHEBI:58354"/>
        <dbReference type="ChEBI" id="CHEBI:59789"/>
        <dbReference type="ChEBI" id="CHEBI:137981"/>
        <dbReference type="EC" id="4.1.99.17"/>
    </reaction>
</comment>
<comment type="cofactor">
    <cofactor evidence="1">
        <name>[4Fe-4S] cluster</name>
        <dbReference type="ChEBI" id="CHEBI:49883"/>
    </cofactor>
    <text evidence="1">Binds 1 [4Fe-4S] cluster per subunit. The cluster is coordinated with 3 cysteines and an exchangeable S-adenosyl-L-methionine.</text>
</comment>
<comment type="pathway">
    <text evidence="1">Cofactor biosynthesis; thiamine diphosphate biosynthesis.</text>
</comment>
<comment type="subunit">
    <text evidence="1">Homodimer.</text>
</comment>
<comment type="similarity">
    <text evidence="1">Belongs to the ThiC family.</text>
</comment>
<feature type="chain" id="PRO_1000093218" description="Phosphomethylpyrimidine synthase">
    <location>
        <begin position="1"/>
        <end position="632"/>
    </location>
</feature>
<feature type="region of interest" description="Disordered" evidence="2">
    <location>
        <begin position="1"/>
        <end position="26"/>
    </location>
</feature>
<feature type="compositionally biased region" description="Polar residues" evidence="2">
    <location>
        <begin position="1"/>
        <end position="13"/>
    </location>
</feature>
<feature type="binding site" evidence="1">
    <location>
        <position position="221"/>
    </location>
    <ligand>
        <name>substrate</name>
    </ligand>
</feature>
<feature type="binding site" evidence="1">
    <location>
        <position position="250"/>
    </location>
    <ligand>
        <name>substrate</name>
    </ligand>
</feature>
<feature type="binding site" evidence="1">
    <location>
        <position position="279"/>
    </location>
    <ligand>
        <name>substrate</name>
    </ligand>
</feature>
<feature type="binding site" evidence="1">
    <location>
        <position position="315"/>
    </location>
    <ligand>
        <name>substrate</name>
    </ligand>
</feature>
<feature type="binding site" evidence="1">
    <location>
        <begin position="335"/>
        <end position="337"/>
    </location>
    <ligand>
        <name>substrate</name>
    </ligand>
</feature>
<feature type="binding site" evidence="1">
    <location>
        <begin position="376"/>
        <end position="379"/>
    </location>
    <ligand>
        <name>substrate</name>
    </ligand>
</feature>
<feature type="binding site" evidence="1">
    <location>
        <position position="415"/>
    </location>
    <ligand>
        <name>substrate</name>
    </ligand>
</feature>
<feature type="binding site" evidence="1">
    <location>
        <position position="419"/>
    </location>
    <ligand>
        <name>Zn(2+)</name>
        <dbReference type="ChEBI" id="CHEBI:29105"/>
    </ligand>
</feature>
<feature type="binding site" evidence="1">
    <location>
        <position position="442"/>
    </location>
    <ligand>
        <name>substrate</name>
    </ligand>
</feature>
<feature type="binding site" evidence="1">
    <location>
        <position position="483"/>
    </location>
    <ligand>
        <name>Zn(2+)</name>
        <dbReference type="ChEBI" id="CHEBI:29105"/>
    </ligand>
</feature>
<feature type="binding site" evidence="1">
    <location>
        <position position="563"/>
    </location>
    <ligand>
        <name>[4Fe-4S] cluster</name>
        <dbReference type="ChEBI" id="CHEBI:49883"/>
        <note>4Fe-4S-S-AdoMet</note>
    </ligand>
</feature>
<feature type="binding site" evidence="1">
    <location>
        <position position="566"/>
    </location>
    <ligand>
        <name>[4Fe-4S] cluster</name>
        <dbReference type="ChEBI" id="CHEBI:49883"/>
        <note>4Fe-4S-S-AdoMet</note>
    </ligand>
</feature>
<feature type="binding site" evidence="1">
    <location>
        <position position="571"/>
    </location>
    <ligand>
        <name>[4Fe-4S] cluster</name>
        <dbReference type="ChEBI" id="CHEBI:49883"/>
        <note>4Fe-4S-S-AdoMet</note>
    </ligand>
</feature>
<sequence length="632" mass="69555">MNIRSNPDTTLPAVTTGPLPSSRKIFSTPEAAPDLRVPLREIILTEGAGEPNLPVYDTSGPYTDPAVVIDVNAGLPRTRMAWVKERGGIEEYEGREIKPEDNGNVGASHAAAAFKAHHKPVRGVGDAPITQLEFARAGIITKEMIYVAERENIGRKQQLERAEAALKDGESFGADIPAFITPEFVRSEIARGRAIIPCNINHAELEPMIIGRNFLTKINANIGNSAVTSSVEEEVDKMVWAIRWGADTVMDLSTGRNIHTTREWILRNAPIPIGTVPIYQALEKCEGDPVKLTWELYRDTLVEQCEQGVDYFTIHAGVRLPYIHLTANRVTGIVSRGGSIMAKWCLAHHKESFLYTHFEEICDLMRKYDVSFSLGDGLRPGSIADANDRAQFAELETLGELTQIAWKKGCQVMIEGPGHVPMHKIKINMDKQLKECGEAPFYTLGPLTTDIAPGYDHITSGIGAAMIGWFGCAMLCYVTPKEHLGLPNRNDVKTGVITYKISAHASDLAKGHPAAQLRDDALSRARFDFRWEDQFNLGLDPDTAMAFHDETLPKEAHKVAHFCSMCGPKFCSMKITQDVRDYAATLNDPEAVGLPHAGTAEEGMAQMSKKFMDMGGNVYVEADSVKESNKAL</sequence>
<gene>
    <name evidence="1" type="primary">thiC</name>
    <name type="ordered locus">OCAR_7033</name>
    <name type="ordered locus">OCA5_c10610</name>
</gene>
<organism>
    <name type="scientific">Afipia carboxidovorans (strain ATCC 49405 / DSM 1227 / KCTC 32145 / OM5)</name>
    <name type="common">Oligotropha carboxidovorans</name>
    <dbReference type="NCBI Taxonomy" id="504832"/>
    <lineage>
        <taxon>Bacteria</taxon>
        <taxon>Pseudomonadati</taxon>
        <taxon>Pseudomonadota</taxon>
        <taxon>Alphaproteobacteria</taxon>
        <taxon>Hyphomicrobiales</taxon>
        <taxon>Nitrobacteraceae</taxon>
        <taxon>Afipia</taxon>
    </lineage>
</organism>
<keyword id="KW-0004">4Fe-4S</keyword>
<keyword id="KW-0408">Iron</keyword>
<keyword id="KW-0411">Iron-sulfur</keyword>
<keyword id="KW-0456">Lyase</keyword>
<keyword id="KW-0479">Metal-binding</keyword>
<keyword id="KW-1185">Reference proteome</keyword>
<keyword id="KW-0949">S-adenosyl-L-methionine</keyword>
<keyword id="KW-0784">Thiamine biosynthesis</keyword>
<keyword id="KW-0862">Zinc</keyword>
<evidence type="ECO:0000255" key="1">
    <source>
        <dbReference type="HAMAP-Rule" id="MF_00089"/>
    </source>
</evidence>
<evidence type="ECO:0000256" key="2">
    <source>
        <dbReference type="SAM" id="MobiDB-lite"/>
    </source>
</evidence>